<organism>
    <name type="scientific">Saccharomyces cerevisiae (strain ATCC 204508 / S288c)</name>
    <name type="common">Baker's yeast</name>
    <dbReference type="NCBI Taxonomy" id="559292"/>
    <lineage>
        <taxon>Eukaryota</taxon>
        <taxon>Fungi</taxon>
        <taxon>Dikarya</taxon>
        <taxon>Ascomycota</taxon>
        <taxon>Saccharomycotina</taxon>
        <taxon>Saccharomycetes</taxon>
        <taxon>Saccharomycetales</taxon>
        <taxon>Saccharomycetaceae</taxon>
        <taxon>Saccharomyces</taxon>
    </lineage>
</organism>
<gene>
    <name type="ordered locus">YGR035C</name>
</gene>
<sequence length="116" mass="12907">MLLTPAKTTRTEDSANSTDDSSKSSNSFMRAIVSSLMVKPITSLTNTVTCRQSSHHNSSPSKITRYDLIKAAAENDLKRSKSQGREKSRRNSNRRNNEEIFVANTASEIQRTKSSI</sequence>
<dbReference type="EMBL" id="Z72820">
    <property type="protein sequence ID" value="CAA97023.1"/>
    <property type="molecule type" value="Genomic_DNA"/>
</dbReference>
<dbReference type="EMBL" id="AY557818">
    <property type="protein sequence ID" value="AAS56144.1"/>
    <property type="molecule type" value="Genomic_DNA"/>
</dbReference>
<dbReference type="EMBL" id="BK006941">
    <property type="protein sequence ID" value="DAA08132.1"/>
    <property type="molecule type" value="Genomic_DNA"/>
</dbReference>
<dbReference type="PIR" id="S64326">
    <property type="entry name" value="S64326"/>
</dbReference>
<dbReference type="RefSeq" id="NP_011549.1">
    <property type="nucleotide sequence ID" value="NM_001181164.1"/>
</dbReference>
<dbReference type="BioGRID" id="33280">
    <property type="interactions" value="83"/>
</dbReference>
<dbReference type="DIP" id="DIP-4724N"/>
<dbReference type="FunCoup" id="P53222">
    <property type="interactions" value="59"/>
</dbReference>
<dbReference type="STRING" id="4932.YGR035C"/>
<dbReference type="iPTMnet" id="P53222"/>
<dbReference type="PaxDb" id="4932-YGR035C"/>
<dbReference type="PeptideAtlas" id="P53222"/>
<dbReference type="EnsemblFungi" id="YGR035C_mRNA">
    <property type="protein sequence ID" value="YGR035C"/>
    <property type="gene ID" value="YGR035C"/>
</dbReference>
<dbReference type="GeneID" id="852923"/>
<dbReference type="KEGG" id="sce:YGR035C"/>
<dbReference type="AGR" id="SGD:S000003267"/>
<dbReference type="SGD" id="S000003267">
    <property type="gene designation" value="YGR035C"/>
</dbReference>
<dbReference type="VEuPathDB" id="FungiDB:YGR035C"/>
<dbReference type="HOGENOM" id="CLU_2147826_0_0_1"/>
<dbReference type="InParanoid" id="P53222"/>
<dbReference type="OMA" id="NNEEIFC"/>
<dbReference type="OrthoDB" id="4064807at2759"/>
<dbReference type="BioCyc" id="YEAST:G3O-30757-MONOMER"/>
<dbReference type="BioGRID-ORCS" id="852923">
    <property type="hits" value="4 hits in 10 CRISPR screens"/>
</dbReference>
<dbReference type="PRO" id="PR:P53222"/>
<dbReference type="Proteomes" id="UP000002311">
    <property type="component" value="Chromosome VII"/>
</dbReference>
<dbReference type="RNAct" id="P53222">
    <property type="molecule type" value="protein"/>
</dbReference>
<accession>P53222</accession>
<accession>D6VUH1</accession>
<proteinExistence type="predicted"/>
<feature type="chain" id="PRO_0000202792" description="Uncharacterized protein YGR035C">
    <location>
        <begin position="1"/>
        <end position="116"/>
    </location>
</feature>
<feature type="region of interest" description="Disordered" evidence="1">
    <location>
        <begin position="1"/>
        <end position="26"/>
    </location>
</feature>
<feature type="region of interest" description="Disordered" evidence="1">
    <location>
        <begin position="74"/>
        <end position="116"/>
    </location>
</feature>
<feature type="compositionally biased region" description="Low complexity" evidence="1">
    <location>
        <begin position="14"/>
        <end position="26"/>
    </location>
</feature>
<feature type="compositionally biased region" description="Basic and acidic residues" evidence="1">
    <location>
        <begin position="74"/>
        <end position="86"/>
    </location>
</feature>
<feature type="compositionally biased region" description="Polar residues" evidence="1">
    <location>
        <begin position="104"/>
        <end position="116"/>
    </location>
</feature>
<evidence type="ECO:0000256" key="1">
    <source>
        <dbReference type="SAM" id="MobiDB-lite"/>
    </source>
</evidence>
<name>YG1O_YEAST</name>
<keyword id="KW-1185">Reference proteome</keyword>
<reference key="1">
    <citation type="journal article" date="1997" name="Yeast">
        <title>Sequence analysis of 203 kilobases from Saccharomyces cerevisiae chromosome VII.</title>
        <authorList>
            <person name="Rieger M."/>
            <person name="Brueckner M."/>
            <person name="Schaefer M."/>
            <person name="Mueller-Auer S."/>
        </authorList>
    </citation>
    <scope>NUCLEOTIDE SEQUENCE [GENOMIC DNA]</scope>
    <source>
        <strain>ATCC 204508 / S288c</strain>
    </source>
</reference>
<reference key="2">
    <citation type="journal article" date="1997" name="Nature">
        <title>The nucleotide sequence of Saccharomyces cerevisiae chromosome VII.</title>
        <authorList>
            <person name="Tettelin H."/>
            <person name="Agostoni-Carbone M.L."/>
            <person name="Albermann K."/>
            <person name="Albers M."/>
            <person name="Arroyo J."/>
            <person name="Backes U."/>
            <person name="Barreiros T."/>
            <person name="Bertani I."/>
            <person name="Bjourson A.J."/>
            <person name="Brueckner M."/>
            <person name="Bruschi C.V."/>
            <person name="Carignani G."/>
            <person name="Castagnoli L."/>
            <person name="Cerdan E."/>
            <person name="Clemente M.L."/>
            <person name="Coblenz A."/>
            <person name="Coglievina M."/>
            <person name="Coissac E."/>
            <person name="Defoor E."/>
            <person name="Del Bino S."/>
            <person name="Delius H."/>
            <person name="Delneri D."/>
            <person name="de Wergifosse P."/>
            <person name="Dujon B."/>
            <person name="Durand P."/>
            <person name="Entian K.-D."/>
            <person name="Eraso P."/>
            <person name="Escribano V."/>
            <person name="Fabiani L."/>
            <person name="Fartmann B."/>
            <person name="Feroli F."/>
            <person name="Feuermann M."/>
            <person name="Frontali L."/>
            <person name="Garcia-Gonzalez M."/>
            <person name="Garcia-Saez M.I."/>
            <person name="Goffeau A."/>
            <person name="Guerreiro P."/>
            <person name="Hani J."/>
            <person name="Hansen M."/>
            <person name="Hebling U."/>
            <person name="Hernandez K."/>
            <person name="Heumann K."/>
            <person name="Hilger F."/>
            <person name="Hofmann B."/>
            <person name="Indge K.J."/>
            <person name="James C.M."/>
            <person name="Klima R."/>
            <person name="Koetter P."/>
            <person name="Kramer B."/>
            <person name="Kramer W."/>
            <person name="Lauquin G."/>
            <person name="Leuther H."/>
            <person name="Louis E.J."/>
            <person name="Maillier E."/>
            <person name="Marconi A."/>
            <person name="Martegani E."/>
            <person name="Mazon M.J."/>
            <person name="Mazzoni C."/>
            <person name="McReynolds A.D.K."/>
            <person name="Melchioretto P."/>
            <person name="Mewes H.-W."/>
            <person name="Minenkova O."/>
            <person name="Mueller-Auer S."/>
            <person name="Nawrocki A."/>
            <person name="Netter P."/>
            <person name="Neu R."/>
            <person name="Nombela C."/>
            <person name="Oliver S.G."/>
            <person name="Panzeri L."/>
            <person name="Paoluzi S."/>
            <person name="Plevani P."/>
            <person name="Portetelle D."/>
            <person name="Portillo F."/>
            <person name="Potier S."/>
            <person name="Purnelle B."/>
            <person name="Rieger M."/>
            <person name="Riles L."/>
            <person name="Rinaldi T."/>
            <person name="Robben J."/>
            <person name="Rodrigues-Pousada C."/>
            <person name="Rodriguez-Belmonte E."/>
            <person name="Rodriguez-Torres A.M."/>
            <person name="Rose M."/>
            <person name="Ruzzi M."/>
            <person name="Saliola M."/>
            <person name="Sanchez-Perez M."/>
            <person name="Schaefer B."/>
            <person name="Schaefer M."/>
            <person name="Scharfe M."/>
            <person name="Schmidheini T."/>
            <person name="Schreer A."/>
            <person name="Skala J."/>
            <person name="Souciet J.-L."/>
            <person name="Steensma H.Y."/>
            <person name="Talla E."/>
            <person name="Thierry A."/>
            <person name="Vandenbol M."/>
            <person name="van der Aart Q.J.M."/>
            <person name="Van Dyck L."/>
            <person name="Vanoni M."/>
            <person name="Verhasselt P."/>
            <person name="Voet M."/>
            <person name="Volckaert G."/>
            <person name="Wambutt R."/>
            <person name="Watson M.D."/>
            <person name="Weber N."/>
            <person name="Wedler E."/>
            <person name="Wedler H."/>
            <person name="Wipfli P."/>
            <person name="Wolf K."/>
            <person name="Wright L.F."/>
            <person name="Zaccaria P."/>
            <person name="Zimmermann M."/>
            <person name="Zollner A."/>
            <person name="Kleine K."/>
        </authorList>
    </citation>
    <scope>NUCLEOTIDE SEQUENCE [LARGE SCALE GENOMIC DNA]</scope>
    <source>
        <strain>ATCC 204508 / S288c</strain>
    </source>
</reference>
<reference key="3">
    <citation type="journal article" date="2014" name="G3 (Bethesda)">
        <title>The reference genome sequence of Saccharomyces cerevisiae: Then and now.</title>
        <authorList>
            <person name="Engel S.R."/>
            <person name="Dietrich F.S."/>
            <person name="Fisk D.G."/>
            <person name="Binkley G."/>
            <person name="Balakrishnan R."/>
            <person name="Costanzo M.C."/>
            <person name="Dwight S.S."/>
            <person name="Hitz B.C."/>
            <person name="Karra K."/>
            <person name="Nash R.S."/>
            <person name="Weng S."/>
            <person name="Wong E.D."/>
            <person name="Lloyd P."/>
            <person name="Skrzypek M.S."/>
            <person name="Miyasato S.R."/>
            <person name="Simison M."/>
            <person name="Cherry J.M."/>
        </authorList>
    </citation>
    <scope>GENOME REANNOTATION</scope>
    <source>
        <strain>ATCC 204508 / S288c</strain>
    </source>
</reference>
<reference key="4">
    <citation type="journal article" date="2007" name="Genome Res.">
        <title>Approaching a complete repository of sequence-verified protein-encoding clones for Saccharomyces cerevisiae.</title>
        <authorList>
            <person name="Hu Y."/>
            <person name="Rolfs A."/>
            <person name="Bhullar B."/>
            <person name="Murthy T.V.S."/>
            <person name="Zhu C."/>
            <person name="Berger M.F."/>
            <person name="Camargo A.A."/>
            <person name="Kelley F."/>
            <person name="McCarron S."/>
            <person name="Jepson D."/>
            <person name="Richardson A."/>
            <person name="Raphael J."/>
            <person name="Moreira D."/>
            <person name="Taycher E."/>
            <person name="Zuo D."/>
            <person name="Mohr S."/>
            <person name="Kane M.F."/>
            <person name="Williamson J."/>
            <person name="Simpson A.J.G."/>
            <person name="Bulyk M.L."/>
            <person name="Harlow E."/>
            <person name="Marsischky G."/>
            <person name="Kolodner R.D."/>
            <person name="LaBaer J."/>
        </authorList>
    </citation>
    <scope>NUCLEOTIDE SEQUENCE [GENOMIC DNA]</scope>
    <source>
        <strain>ATCC 204508 / S288c</strain>
    </source>
</reference>
<protein>
    <recommendedName>
        <fullName>Uncharacterized protein YGR035C</fullName>
    </recommendedName>
</protein>